<organism>
    <name type="scientific">Zymomonas mobilis subsp. mobilis (strain ATCC 10988 / DSM 424 / LMG 404 / NCIMB 8938 / NRRL B-806 / ZM1)</name>
    <dbReference type="NCBI Taxonomy" id="555217"/>
    <lineage>
        <taxon>Bacteria</taxon>
        <taxon>Pseudomonadati</taxon>
        <taxon>Pseudomonadota</taxon>
        <taxon>Alphaproteobacteria</taxon>
        <taxon>Sphingomonadales</taxon>
        <taxon>Zymomonadaceae</taxon>
        <taxon>Zymomonas</taxon>
    </lineage>
</organism>
<feature type="chain" id="PRO_0000414236" description="HTH-type transcriptional regulator Zrp">
    <location>
        <begin position="1"/>
        <end position="153"/>
    </location>
</feature>
<feature type="domain" description="HTH asnC-type" evidence="1">
    <location>
        <begin position="2"/>
        <end position="63"/>
    </location>
</feature>
<feature type="DNA-binding region" description="H-T-H motif" evidence="1">
    <location>
        <begin position="21"/>
        <end position="40"/>
    </location>
</feature>
<sequence length="153" mass="17411">MIDYRDRHILSLLQANAEMPLAEIAERVALSVSACSRRVARLREEGYIKGTIALLDRKKINLPTTIFLLVKTGLHTGNYLEQFHAAVSAIPEIVEVHRLTGNFDYILKLALPNVEYYDVIYKQILKHVAFYDMSAYISMETVKISPALPTNYI</sequence>
<comment type="sequence caution" evidence="2">
    <conflict type="erroneous initiation">
        <sequence resource="EMBL-CDS" id="AEH62747"/>
    </conflict>
    <text>Extended N-terminus.</text>
</comment>
<accession>F8DT24</accession>
<accession>Q57001</accession>
<accession>Q5NQK8</accession>
<accession>Q9JP79</accession>
<proteinExistence type="predicted"/>
<evidence type="ECO:0000255" key="1">
    <source>
        <dbReference type="PROSITE-ProRule" id="PRU00319"/>
    </source>
</evidence>
<evidence type="ECO:0000305" key="2"/>
<dbReference type="EMBL" id="AF081588">
    <property type="protein sequence ID" value="AAD54636.1"/>
    <property type="molecule type" value="Genomic_DNA"/>
</dbReference>
<dbReference type="EMBL" id="CP002850">
    <property type="protein sequence ID" value="AEH62747.1"/>
    <property type="status" value="ALT_INIT"/>
    <property type="molecule type" value="Genomic_DNA"/>
</dbReference>
<dbReference type="RefSeq" id="WP_012817356.1">
    <property type="nucleotide sequence ID" value="NC_017262.1"/>
</dbReference>
<dbReference type="SMR" id="F8DT24"/>
<dbReference type="KEGG" id="zmm:Zmob_0912"/>
<dbReference type="eggNOG" id="COG1522">
    <property type="taxonomic scope" value="Bacteria"/>
</dbReference>
<dbReference type="HOGENOM" id="CLU_091233_0_2_5"/>
<dbReference type="OrthoDB" id="9813313at2"/>
<dbReference type="Proteomes" id="UP000001494">
    <property type="component" value="Chromosome"/>
</dbReference>
<dbReference type="GO" id="GO:0005829">
    <property type="term" value="C:cytosol"/>
    <property type="evidence" value="ECO:0007669"/>
    <property type="project" value="TreeGrafter"/>
</dbReference>
<dbReference type="GO" id="GO:0043565">
    <property type="term" value="F:sequence-specific DNA binding"/>
    <property type="evidence" value="ECO:0007669"/>
    <property type="project" value="InterPro"/>
</dbReference>
<dbReference type="GO" id="GO:0043200">
    <property type="term" value="P:response to amino acid"/>
    <property type="evidence" value="ECO:0007669"/>
    <property type="project" value="TreeGrafter"/>
</dbReference>
<dbReference type="CDD" id="cd00090">
    <property type="entry name" value="HTH_ARSR"/>
    <property type="match status" value="1"/>
</dbReference>
<dbReference type="Gene3D" id="3.30.70.920">
    <property type="match status" value="1"/>
</dbReference>
<dbReference type="Gene3D" id="1.10.10.10">
    <property type="entry name" value="Winged helix-like DNA-binding domain superfamily/Winged helix DNA-binding domain"/>
    <property type="match status" value="1"/>
</dbReference>
<dbReference type="InterPro" id="IPR011991">
    <property type="entry name" value="ArsR-like_HTH"/>
</dbReference>
<dbReference type="InterPro" id="IPR000485">
    <property type="entry name" value="AsnC-type_HTH_dom"/>
</dbReference>
<dbReference type="InterPro" id="IPR011008">
    <property type="entry name" value="Dimeric_a/b-barrel"/>
</dbReference>
<dbReference type="InterPro" id="IPR019888">
    <property type="entry name" value="Tscrpt_reg_AsnC-like"/>
</dbReference>
<dbReference type="InterPro" id="IPR019887">
    <property type="entry name" value="Tscrpt_reg_AsnC/Lrp_C"/>
</dbReference>
<dbReference type="InterPro" id="IPR019885">
    <property type="entry name" value="Tscrpt_reg_HTH_AsnC-type_CS"/>
</dbReference>
<dbReference type="InterPro" id="IPR036388">
    <property type="entry name" value="WH-like_DNA-bd_sf"/>
</dbReference>
<dbReference type="InterPro" id="IPR036390">
    <property type="entry name" value="WH_DNA-bd_sf"/>
</dbReference>
<dbReference type="PANTHER" id="PTHR30154:SF17">
    <property type="entry name" value="DNA-BINDING TRANSCRIPTIONAL ACTIVATOR DECR"/>
    <property type="match status" value="1"/>
</dbReference>
<dbReference type="PANTHER" id="PTHR30154">
    <property type="entry name" value="LEUCINE-RESPONSIVE REGULATORY PROTEIN"/>
    <property type="match status" value="1"/>
</dbReference>
<dbReference type="Pfam" id="PF01037">
    <property type="entry name" value="AsnC_trans_reg"/>
    <property type="match status" value="1"/>
</dbReference>
<dbReference type="Pfam" id="PF13412">
    <property type="entry name" value="HTH_24"/>
    <property type="match status" value="1"/>
</dbReference>
<dbReference type="PRINTS" id="PR00033">
    <property type="entry name" value="HTHASNC"/>
</dbReference>
<dbReference type="SMART" id="SM00344">
    <property type="entry name" value="HTH_ASNC"/>
    <property type="match status" value="1"/>
</dbReference>
<dbReference type="SUPFAM" id="SSF54909">
    <property type="entry name" value="Dimeric alpha+beta barrel"/>
    <property type="match status" value="1"/>
</dbReference>
<dbReference type="SUPFAM" id="SSF46785">
    <property type="entry name" value="Winged helix' DNA-binding domain"/>
    <property type="match status" value="1"/>
</dbReference>
<dbReference type="PROSITE" id="PS00519">
    <property type="entry name" value="HTH_ASNC_1"/>
    <property type="match status" value="1"/>
</dbReference>
<dbReference type="PROSITE" id="PS50956">
    <property type="entry name" value="HTH_ASNC_2"/>
    <property type="match status" value="1"/>
</dbReference>
<gene>
    <name type="primary">zrp</name>
    <name type="ordered locus">Zmob_0912</name>
</gene>
<reference key="1">
    <citation type="submission" date="1998-08" db="EMBL/GenBank/DDBJ databases">
        <authorList>
            <person name="Song K.B."/>
            <person name="Joo H.K."/>
            <person name="Rhee S.-K."/>
        </authorList>
    </citation>
    <scope>NUCLEOTIDE SEQUENCE [GENOMIC DNA]</scope>
    <source>
        <strain>ATCC 10988 / DSM 424 / CCUG 17860 / LMG 404 / NCIMB 8938 / NRRL B-806 / ZM1</strain>
    </source>
</reference>
<reference key="2">
    <citation type="journal article" date="2011" name="J. Bacteriol.">
        <title>Genome sequence of the ethanol-producing Zymomonas mobilis subsp. mobilis lectotype strain ATCC 10988.</title>
        <authorList>
            <person name="Pappas K.M."/>
            <person name="Kouvelis V.N."/>
            <person name="Saunders E."/>
            <person name="Brettin T.S."/>
            <person name="Bruce D."/>
            <person name="Detter C."/>
            <person name="Balakireva M."/>
            <person name="Han C.S."/>
            <person name="Savvakis G."/>
            <person name="Kyrpides N.C."/>
            <person name="Typas M.A."/>
        </authorList>
    </citation>
    <scope>NUCLEOTIDE SEQUENCE [LARGE SCALE GENOMIC DNA]</scope>
    <source>
        <strain>ATCC 10988 / DSM 424 / CCUG 17860 / LMG 404 / NCIMB 8938 / NRRL B-806 / ZM1</strain>
    </source>
</reference>
<keyword id="KW-0238">DNA-binding</keyword>
<keyword id="KW-0804">Transcription</keyword>
<keyword id="KW-0805">Transcription regulation</keyword>
<protein>
    <recommendedName>
        <fullName>HTH-type transcriptional regulator Zrp</fullName>
    </recommendedName>
    <alternativeName>
        <fullName>Global regulatory protein</fullName>
    </alternativeName>
</protein>
<name>ZRP_ZYMMA</name>